<protein>
    <recommendedName>
        <fullName evidence="1">ATP phosphoribosyltransferase</fullName>
        <shortName evidence="1">ATP-PRT</shortName>
        <shortName evidence="1">ATP-PRTase</shortName>
        <ecNumber evidence="1">2.4.2.17</ecNumber>
    </recommendedName>
</protein>
<proteinExistence type="inferred from homology"/>
<comment type="function">
    <text evidence="1">Catalyzes the condensation of ATP and 5-phosphoribose 1-diphosphate to form N'-(5'-phosphoribosyl)-ATP (PR-ATP). Has a crucial role in the pathway because the rate of histidine biosynthesis seems to be controlled primarily by regulation of HisG enzymatic activity.</text>
</comment>
<comment type="catalytic activity">
    <reaction evidence="1">
        <text>1-(5-phospho-beta-D-ribosyl)-ATP + diphosphate = 5-phospho-alpha-D-ribose 1-diphosphate + ATP</text>
        <dbReference type="Rhea" id="RHEA:18473"/>
        <dbReference type="ChEBI" id="CHEBI:30616"/>
        <dbReference type="ChEBI" id="CHEBI:33019"/>
        <dbReference type="ChEBI" id="CHEBI:58017"/>
        <dbReference type="ChEBI" id="CHEBI:73183"/>
        <dbReference type="EC" id="2.4.2.17"/>
    </reaction>
</comment>
<comment type="pathway">
    <text evidence="1">Amino-acid biosynthesis; L-histidine biosynthesis; L-histidine from 5-phospho-alpha-D-ribose 1-diphosphate: step 1/9.</text>
</comment>
<comment type="subunit">
    <text evidence="1">Heteromultimer composed of HisG and HisZ subunits.</text>
</comment>
<comment type="subcellular location">
    <subcellularLocation>
        <location evidence="1">Cytoplasm</location>
    </subcellularLocation>
</comment>
<comment type="domain">
    <text>Lacks the C-terminal regulatory region which is replaced by HisZ.</text>
</comment>
<comment type="similarity">
    <text evidence="1">Belongs to the ATP phosphoribosyltransferase family. Short subfamily.</text>
</comment>
<name>HIS1_BRUA1</name>
<accession>B2SCY9</accession>
<evidence type="ECO:0000255" key="1">
    <source>
        <dbReference type="HAMAP-Rule" id="MF_01018"/>
    </source>
</evidence>
<gene>
    <name evidence="1" type="primary">hisG</name>
    <name type="ordered locus">BAbS19_II01740</name>
</gene>
<sequence>MSVTLALPSKGRLKEKTLAVLEKAGYKVVLPDDDRNYRARVEGEDDLDILFLSASEIARELGYGSVDLGVTGEDLVRETLAHADERVAIEAQLGFGHADVVVAVPEVWRDVTTMADLDDVAADFRQRHGRRLRIATKYWRLTQQFFSQKHGIQVYRIVESLGATEGAPAAGSADMIVDITSTGSTLRANRLKVLEDGIILRSQACLVSARRSHTSRRVEEIAARIRAGLEI</sequence>
<keyword id="KW-0028">Amino-acid biosynthesis</keyword>
<keyword id="KW-0067">ATP-binding</keyword>
<keyword id="KW-0963">Cytoplasm</keyword>
<keyword id="KW-0328">Glycosyltransferase</keyword>
<keyword id="KW-0368">Histidine biosynthesis</keyword>
<keyword id="KW-0547">Nucleotide-binding</keyword>
<keyword id="KW-0808">Transferase</keyword>
<reference key="1">
    <citation type="journal article" date="2008" name="PLoS ONE">
        <title>Genome sequence of Brucella abortus vaccine strain S19 compared to virulent strains yields candidate virulence genes.</title>
        <authorList>
            <person name="Crasta O.R."/>
            <person name="Folkerts O."/>
            <person name="Fei Z."/>
            <person name="Mane S.P."/>
            <person name="Evans C."/>
            <person name="Martino-Catt S."/>
            <person name="Bricker B."/>
            <person name="Yu G."/>
            <person name="Du L."/>
            <person name="Sobral B.W."/>
        </authorList>
    </citation>
    <scope>NUCLEOTIDE SEQUENCE [LARGE SCALE GENOMIC DNA]</scope>
    <source>
        <strain>S19</strain>
    </source>
</reference>
<feature type="chain" id="PRO_1000135271" description="ATP phosphoribosyltransferase">
    <location>
        <begin position="1"/>
        <end position="231"/>
    </location>
</feature>
<dbReference type="EC" id="2.4.2.17" evidence="1"/>
<dbReference type="EMBL" id="CP000888">
    <property type="protein sequence ID" value="ACD73693.1"/>
    <property type="molecule type" value="Genomic_DNA"/>
</dbReference>
<dbReference type="RefSeq" id="WP_002966393.1">
    <property type="nucleotide sequence ID" value="NC_010740.1"/>
</dbReference>
<dbReference type="SMR" id="B2SCY9"/>
<dbReference type="GeneID" id="93015854"/>
<dbReference type="KEGG" id="bmc:BAbS19_II01740"/>
<dbReference type="HOGENOM" id="CLU_038115_0_1_5"/>
<dbReference type="UniPathway" id="UPA00031">
    <property type="reaction ID" value="UER00006"/>
</dbReference>
<dbReference type="Proteomes" id="UP000002565">
    <property type="component" value="Chromosome 2"/>
</dbReference>
<dbReference type="GO" id="GO:0005737">
    <property type="term" value="C:cytoplasm"/>
    <property type="evidence" value="ECO:0007669"/>
    <property type="project" value="UniProtKB-SubCell"/>
</dbReference>
<dbReference type="GO" id="GO:0005524">
    <property type="term" value="F:ATP binding"/>
    <property type="evidence" value="ECO:0007669"/>
    <property type="project" value="UniProtKB-KW"/>
</dbReference>
<dbReference type="GO" id="GO:0003879">
    <property type="term" value="F:ATP phosphoribosyltransferase activity"/>
    <property type="evidence" value="ECO:0007669"/>
    <property type="project" value="UniProtKB-UniRule"/>
</dbReference>
<dbReference type="GO" id="GO:0000105">
    <property type="term" value="P:L-histidine biosynthetic process"/>
    <property type="evidence" value="ECO:0007669"/>
    <property type="project" value="UniProtKB-UniRule"/>
</dbReference>
<dbReference type="CDD" id="cd13593">
    <property type="entry name" value="PBP2_HisGL3"/>
    <property type="match status" value="1"/>
</dbReference>
<dbReference type="Gene3D" id="3.40.190.10">
    <property type="entry name" value="Periplasmic binding protein-like II"/>
    <property type="match status" value="2"/>
</dbReference>
<dbReference type="HAMAP" id="MF_01018">
    <property type="entry name" value="HisG_Short"/>
    <property type="match status" value="1"/>
</dbReference>
<dbReference type="InterPro" id="IPR013820">
    <property type="entry name" value="ATP_PRibTrfase_cat"/>
</dbReference>
<dbReference type="InterPro" id="IPR018198">
    <property type="entry name" value="ATP_PRibTrfase_CS"/>
</dbReference>
<dbReference type="InterPro" id="IPR001348">
    <property type="entry name" value="ATP_PRibTrfase_HisG"/>
</dbReference>
<dbReference type="InterPro" id="IPR024893">
    <property type="entry name" value="ATP_PRibTrfase_HisG_short"/>
</dbReference>
<dbReference type="NCBIfam" id="TIGR00070">
    <property type="entry name" value="hisG"/>
    <property type="match status" value="1"/>
</dbReference>
<dbReference type="PANTHER" id="PTHR21403:SF8">
    <property type="entry name" value="ATP PHOSPHORIBOSYLTRANSFERASE"/>
    <property type="match status" value="1"/>
</dbReference>
<dbReference type="PANTHER" id="PTHR21403">
    <property type="entry name" value="ATP PHOSPHORIBOSYLTRANSFERASE ATP-PRTASE"/>
    <property type="match status" value="1"/>
</dbReference>
<dbReference type="Pfam" id="PF01634">
    <property type="entry name" value="HisG"/>
    <property type="match status" value="1"/>
</dbReference>
<dbReference type="SUPFAM" id="SSF53850">
    <property type="entry name" value="Periplasmic binding protein-like II"/>
    <property type="match status" value="1"/>
</dbReference>
<dbReference type="PROSITE" id="PS01316">
    <property type="entry name" value="ATP_P_PHORIBOSYLTR"/>
    <property type="match status" value="1"/>
</dbReference>
<organism>
    <name type="scientific">Brucella abortus (strain S19)</name>
    <dbReference type="NCBI Taxonomy" id="430066"/>
    <lineage>
        <taxon>Bacteria</taxon>
        <taxon>Pseudomonadati</taxon>
        <taxon>Pseudomonadota</taxon>
        <taxon>Alphaproteobacteria</taxon>
        <taxon>Hyphomicrobiales</taxon>
        <taxon>Brucellaceae</taxon>
        <taxon>Brucella/Ochrobactrum group</taxon>
        <taxon>Brucella</taxon>
    </lineage>
</organism>